<comment type="function">
    <text evidence="1">The RecF protein is involved in DNA metabolism; it is required for DNA replication and normal SOS inducibility. RecF binds preferentially to single-stranded, linear DNA. It also seems to bind ATP.</text>
</comment>
<comment type="subcellular location">
    <subcellularLocation>
        <location evidence="1">Cytoplasm</location>
    </subcellularLocation>
</comment>
<comment type="similarity">
    <text evidence="1">Belongs to the RecF family.</text>
</comment>
<sequence length="371" mass="42648">MKLKTLQLENYRNYEEVTLECHPDVNILIGENAQGKTNLLESIYTLALAKSHRTSNDKELIRFNSEYAKIEGVLNYRHGTMPLTMFITKKGKQVKVNHLEQSRLTQYVGHLNVVLFAPEDLNIVKGSPQIRRRFIDMELGQISAVYLNDLAQYQRILKQKNNYLKQLQLGQKQDTTMLEVLNQQFAQYALNVTLRREHFIKELESLAKPIHAGITNERETLSLTYLPSIKLSDMSKGEQTLWDEVITLLNDNIKREMDRGVCLFGPHRDDLGFNVNDMDAQTYGSQGQQRTTALSIKLAEIELMNIEVGEYPILLLDDVLSELDDSRQTHLLSTIQHKVQTFVTTTSVDGIDHEIMNNAKLYRINQGEIIK</sequence>
<dbReference type="EMBL" id="AP006716">
    <property type="protein sequence ID" value="BAE03313.1"/>
    <property type="molecule type" value="Genomic_DNA"/>
</dbReference>
<dbReference type="RefSeq" id="WP_011274362.1">
    <property type="nucleotide sequence ID" value="NC_007168.1"/>
</dbReference>
<dbReference type="SMR" id="Q4LAL2"/>
<dbReference type="KEGG" id="sha:SH0004"/>
<dbReference type="eggNOG" id="COG1195">
    <property type="taxonomic scope" value="Bacteria"/>
</dbReference>
<dbReference type="HOGENOM" id="CLU_040267_0_1_9"/>
<dbReference type="OrthoDB" id="9803889at2"/>
<dbReference type="Proteomes" id="UP000000543">
    <property type="component" value="Chromosome"/>
</dbReference>
<dbReference type="GO" id="GO:0005737">
    <property type="term" value="C:cytoplasm"/>
    <property type="evidence" value="ECO:0007669"/>
    <property type="project" value="UniProtKB-SubCell"/>
</dbReference>
<dbReference type="GO" id="GO:0005524">
    <property type="term" value="F:ATP binding"/>
    <property type="evidence" value="ECO:0007669"/>
    <property type="project" value="UniProtKB-UniRule"/>
</dbReference>
<dbReference type="GO" id="GO:0003697">
    <property type="term" value="F:single-stranded DNA binding"/>
    <property type="evidence" value="ECO:0007669"/>
    <property type="project" value="UniProtKB-UniRule"/>
</dbReference>
<dbReference type="GO" id="GO:0006260">
    <property type="term" value="P:DNA replication"/>
    <property type="evidence" value="ECO:0007669"/>
    <property type="project" value="UniProtKB-UniRule"/>
</dbReference>
<dbReference type="GO" id="GO:0000731">
    <property type="term" value="P:DNA synthesis involved in DNA repair"/>
    <property type="evidence" value="ECO:0007669"/>
    <property type="project" value="TreeGrafter"/>
</dbReference>
<dbReference type="GO" id="GO:0006302">
    <property type="term" value="P:double-strand break repair"/>
    <property type="evidence" value="ECO:0007669"/>
    <property type="project" value="TreeGrafter"/>
</dbReference>
<dbReference type="GO" id="GO:0009432">
    <property type="term" value="P:SOS response"/>
    <property type="evidence" value="ECO:0007669"/>
    <property type="project" value="UniProtKB-UniRule"/>
</dbReference>
<dbReference type="CDD" id="cd03242">
    <property type="entry name" value="ABC_RecF"/>
    <property type="match status" value="1"/>
</dbReference>
<dbReference type="FunFam" id="1.20.1050.90:FF:000002">
    <property type="entry name" value="DNA replication and repair protein RecF"/>
    <property type="match status" value="1"/>
</dbReference>
<dbReference type="Gene3D" id="3.40.50.300">
    <property type="entry name" value="P-loop containing nucleotide triphosphate hydrolases"/>
    <property type="match status" value="1"/>
</dbReference>
<dbReference type="Gene3D" id="1.20.1050.90">
    <property type="entry name" value="RecF/RecN/SMC, N-terminal domain"/>
    <property type="match status" value="1"/>
</dbReference>
<dbReference type="HAMAP" id="MF_00365">
    <property type="entry name" value="RecF"/>
    <property type="match status" value="1"/>
</dbReference>
<dbReference type="InterPro" id="IPR001238">
    <property type="entry name" value="DNA-binding_RecF"/>
</dbReference>
<dbReference type="InterPro" id="IPR018078">
    <property type="entry name" value="DNA-binding_RecF_CS"/>
</dbReference>
<dbReference type="InterPro" id="IPR027417">
    <property type="entry name" value="P-loop_NTPase"/>
</dbReference>
<dbReference type="InterPro" id="IPR003395">
    <property type="entry name" value="RecF/RecN/SMC_N"/>
</dbReference>
<dbReference type="InterPro" id="IPR042174">
    <property type="entry name" value="RecF_2"/>
</dbReference>
<dbReference type="NCBIfam" id="TIGR00611">
    <property type="entry name" value="recf"/>
    <property type="match status" value="1"/>
</dbReference>
<dbReference type="PANTHER" id="PTHR32182">
    <property type="entry name" value="DNA REPLICATION AND REPAIR PROTEIN RECF"/>
    <property type="match status" value="1"/>
</dbReference>
<dbReference type="PANTHER" id="PTHR32182:SF0">
    <property type="entry name" value="DNA REPLICATION AND REPAIR PROTEIN RECF"/>
    <property type="match status" value="1"/>
</dbReference>
<dbReference type="Pfam" id="PF02463">
    <property type="entry name" value="SMC_N"/>
    <property type="match status" value="1"/>
</dbReference>
<dbReference type="SUPFAM" id="SSF52540">
    <property type="entry name" value="P-loop containing nucleoside triphosphate hydrolases"/>
    <property type="match status" value="1"/>
</dbReference>
<dbReference type="PROSITE" id="PS00617">
    <property type="entry name" value="RECF_1"/>
    <property type="match status" value="1"/>
</dbReference>
<dbReference type="PROSITE" id="PS00618">
    <property type="entry name" value="RECF_2"/>
    <property type="match status" value="1"/>
</dbReference>
<keyword id="KW-0067">ATP-binding</keyword>
<keyword id="KW-0963">Cytoplasm</keyword>
<keyword id="KW-0227">DNA damage</keyword>
<keyword id="KW-0234">DNA repair</keyword>
<keyword id="KW-0235">DNA replication</keyword>
<keyword id="KW-0238">DNA-binding</keyword>
<keyword id="KW-0547">Nucleotide-binding</keyword>
<keyword id="KW-0742">SOS response</keyword>
<protein>
    <recommendedName>
        <fullName evidence="1">DNA replication and repair protein RecF</fullName>
    </recommendedName>
</protein>
<reference key="1">
    <citation type="journal article" date="2005" name="J. Bacteriol.">
        <title>Whole-genome sequencing of Staphylococcus haemolyticus uncovers the extreme plasticity of its genome and the evolution of human-colonizing staphylococcal species.</title>
        <authorList>
            <person name="Takeuchi F."/>
            <person name="Watanabe S."/>
            <person name="Baba T."/>
            <person name="Yuzawa H."/>
            <person name="Ito T."/>
            <person name="Morimoto Y."/>
            <person name="Kuroda M."/>
            <person name="Cui L."/>
            <person name="Takahashi M."/>
            <person name="Ankai A."/>
            <person name="Baba S."/>
            <person name="Fukui S."/>
            <person name="Lee J.C."/>
            <person name="Hiramatsu K."/>
        </authorList>
    </citation>
    <scope>NUCLEOTIDE SEQUENCE [LARGE SCALE GENOMIC DNA]</scope>
    <source>
        <strain>JCSC1435</strain>
    </source>
</reference>
<organism>
    <name type="scientific">Staphylococcus haemolyticus (strain JCSC1435)</name>
    <dbReference type="NCBI Taxonomy" id="279808"/>
    <lineage>
        <taxon>Bacteria</taxon>
        <taxon>Bacillati</taxon>
        <taxon>Bacillota</taxon>
        <taxon>Bacilli</taxon>
        <taxon>Bacillales</taxon>
        <taxon>Staphylococcaceae</taxon>
        <taxon>Staphylococcus</taxon>
    </lineage>
</organism>
<accession>Q4LAL2</accession>
<proteinExistence type="inferred from homology"/>
<feature type="chain" id="PRO_0000196465" description="DNA replication and repair protein RecF">
    <location>
        <begin position="1"/>
        <end position="371"/>
    </location>
</feature>
<feature type="binding site" evidence="1">
    <location>
        <begin position="30"/>
        <end position="37"/>
    </location>
    <ligand>
        <name>ATP</name>
        <dbReference type="ChEBI" id="CHEBI:30616"/>
    </ligand>
</feature>
<evidence type="ECO:0000255" key="1">
    <source>
        <dbReference type="HAMAP-Rule" id="MF_00365"/>
    </source>
</evidence>
<gene>
    <name evidence="1" type="primary">recF</name>
    <name type="ordered locus">SH0004</name>
</gene>
<name>RECF_STAHJ</name>